<sequence length="158" mass="18662">MGSDKKTTEEKRKHKRNSPSSPRDEVKSKRQNIKGDEERRKEKDKSKKEKHKSHKSKCHSSEEKKSGEKHKTKSHKHKDKSKNKFEELSKDDYFSKNNEFASWLKDKKNLFFSDLSSETARNLFSDFVIQWNKGKLDSQYYEGIATGPRSSHAWNIKK</sequence>
<feature type="chain" id="PRO_0000444451" description="Style cell-cycle inhibitor 1-B">
    <location>
        <begin position="1"/>
        <end position="158"/>
    </location>
</feature>
<feature type="region of interest" description="Disordered" evidence="1">
    <location>
        <begin position="1"/>
        <end position="88"/>
    </location>
</feature>
<feature type="compositionally biased region" description="Basic and acidic residues" evidence="1">
    <location>
        <begin position="1"/>
        <end position="11"/>
    </location>
</feature>
<feature type="compositionally biased region" description="Basic and acidic residues" evidence="1">
    <location>
        <begin position="22"/>
        <end position="47"/>
    </location>
</feature>
<feature type="compositionally biased region" description="Basic residues" evidence="1">
    <location>
        <begin position="48"/>
        <end position="58"/>
    </location>
</feature>
<feature type="compositionally biased region" description="Basic residues" evidence="1">
    <location>
        <begin position="67"/>
        <end position="81"/>
    </location>
</feature>
<reference key="1">
    <citation type="journal article" date="2014" name="Nat. Commun.">
        <title>The tobacco genome sequence and its comparison with those of tomato and potato.</title>
        <authorList>
            <person name="Sierro N."/>
            <person name="Battey J.N."/>
            <person name="Ouadi S."/>
            <person name="Bakaher N."/>
            <person name="Bovet L."/>
            <person name="Willig A."/>
            <person name="Goepfert S."/>
            <person name="Peitsch M.C."/>
            <person name="Ivanov N.V."/>
        </authorList>
    </citation>
    <scope>NUCLEOTIDE SEQUENCE [LARGE SCALE GENOMIC DNA]</scope>
    <source>
        <strain>cv. TN90</strain>
    </source>
</reference>
<reference key="2">
    <citation type="journal article" date="2011" name="New Phytol.">
        <title>Stigma/style cell cycle inhibitor 1 (SCI1), a tissue-specific cell cycle regulator that controls upper pistil development.</title>
        <authorList>
            <person name="Depaoli H.C."/>
            <person name="Brito M.S."/>
            <person name="Quiapim A.C."/>
            <person name="Teixeira S.P."/>
            <person name="Goldman G.H."/>
            <person name="Dornelas M.C."/>
            <person name="Goldman M.-H.S."/>
        </authorList>
    </citation>
    <scope>NUCLEOTIDE SEQUENCE [MRNA] OF 1-147</scope>
    <scope>FUNCTION</scope>
    <scope>DISRUPTION PHENOTYPE</scope>
    <scope>SUBCELLULAR LOCATION</scope>
    <scope>TISSUE SPECIFICITY</scope>
    <scope>DEVELOPMENTAL STAGE</scope>
</reference>
<reference key="3">
    <citation type="journal article" date="2012" name="Plant Signal. Behav.">
        <title>SCI1, the first member of the tissue-specific inhibitors of CDK (TIC) class, is probably connected to the auxin signaling pathway.</title>
        <authorList>
            <person name="DePaoli H.C."/>
            <person name="Goldman G.H."/>
            <person name="Goldman M.-H.S."/>
        </authorList>
    </citation>
    <scope>FUNCTION</scope>
</reference>
<protein>
    <recommendedName>
        <fullName evidence="4">Style cell-cycle inhibitor 1-B</fullName>
        <shortName evidence="4">NtSCI1</shortName>
    </recommendedName>
</protein>
<keyword id="KW-0927">Auxin signaling pathway</keyword>
<keyword id="KW-0217">Developmental protein</keyword>
<keyword id="KW-0539">Nucleus</keyword>
<keyword id="KW-1185">Reference proteome</keyword>
<comment type="function">
    <text evidence="2 3">Component of the auxin signaling transduction pathway that regulates cell proliferation and differentiation during flowers stigmas and styles development (PubMed:21388377). Involved in the regulation of auxin-related genes (PubMed:22301969).</text>
</comment>
<comment type="subcellular location">
    <subcellularLocation>
        <location evidence="2">Nucleus</location>
    </subcellularLocation>
    <text evidence="2">Inside the nucleus, confined to the interchromatic region.</text>
</comment>
<comment type="tissue specificity">
    <text evidence="2">Specifically expressed in flowers pistils, especially in stigmas and styles. Barely detected in roots, stems, leaves, sepals, petals and stamen.</text>
</comment>
<comment type="developmental stage">
    <text evidence="2">Expressed at high levels at the early stages of pistil development (stages 1 to 6) and disappears towards anthesis (stages 7 to 12). At stage 4, observed in the stigmatic secretory zone, including the papillar cells, and in the stylar transmitting tissue. Expressed in stigma and style specialized tissues at initial stages of flower development.</text>
</comment>
<comment type="disruption phenotype">
    <text evidence="2">Enlarged stigmas and styles due to increased in cell numbers.</text>
</comment>
<organism>
    <name type="scientific">Nicotiana tabacum</name>
    <name type="common">Common tobacco</name>
    <dbReference type="NCBI Taxonomy" id="4097"/>
    <lineage>
        <taxon>Eukaryota</taxon>
        <taxon>Viridiplantae</taxon>
        <taxon>Streptophyta</taxon>
        <taxon>Embryophyta</taxon>
        <taxon>Tracheophyta</taxon>
        <taxon>Spermatophyta</taxon>
        <taxon>Magnoliopsida</taxon>
        <taxon>eudicotyledons</taxon>
        <taxon>Gunneridae</taxon>
        <taxon>Pentapetalae</taxon>
        <taxon>asterids</taxon>
        <taxon>lamiids</taxon>
        <taxon>Solanales</taxon>
        <taxon>Solanaceae</taxon>
        <taxon>Nicotianoideae</taxon>
        <taxon>Nicotianeae</taxon>
        <taxon>Nicotiana</taxon>
    </lineage>
</organism>
<evidence type="ECO:0000256" key="1">
    <source>
        <dbReference type="SAM" id="MobiDB-lite"/>
    </source>
</evidence>
<evidence type="ECO:0000269" key="2">
    <source>
    </source>
</evidence>
<evidence type="ECO:0000269" key="3">
    <source>
    </source>
</evidence>
<evidence type="ECO:0000303" key="4">
    <source>
    </source>
</evidence>
<name>SCI1B_TOBAC</name>
<dbReference type="EMBL" id="GQ272330">
    <property type="protein sequence ID" value="ADG60254.1"/>
    <property type="molecule type" value="mRNA"/>
</dbReference>
<dbReference type="RefSeq" id="NP_001412694.1">
    <property type="nucleotide sequence ID" value="NM_001425765.1"/>
</dbReference>
<dbReference type="STRING" id="4097.A0A1S3XQD6"/>
<dbReference type="PaxDb" id="4097-A0A1S3XQD6"/>
<dbReference type="GeneID" id="107767402"/>
<dbReference type="Proteomes" id="UP000084051">
    <property type="component" value="Unplaced"/>
</dbReference>
<dbReference type="GO" id="GO:0005634">
    <property type="term" value="C:nucleus"/>
    <property type="evidence" value="ECO:0000314"/>
    <property type="project" value="UniProtKB"/>
</dbReference>
<dbReference type="GO" id="GO:0009734">
    <property type="term" value="P:auxin-activated signaling pathway"/>
    <property type="evidence" value="ECO:0007669"/>
    <property type="project" value="UniProtKB-KW"/>
</dbReference>
<dbReference type="GO" id="GO:0051782">
    <property type="term" value="P:negative regulation of cell division"/>
    <property type="evidence" value="ECO:0000315"/>
    <property type="project" value="UniProtKB"/>
</dbReference>
<dbReference type="GO" id="GO:0010928">
    <property type="term" value="P:regulation of auxin mediated signaling pathway"/>
    <property type="evidence" value="ECO:0000315"/>
    <property type="project" value="UniProtKB"/>
</dbReference>
<dbReference type="GO" id="GO:0048480">
    <property type="term" value="P:stigma development"/>
    <property type="evidence" value="ECO:0000315"/>
    <property type="project" value="UniProtKB"/>
</dbReference>
<dbReference type="GO" id="GO:0048479">
    <property type="term" value="P:style development"/>
    <property type="evidence" value="ECO:0000315"/>
    <property type="project" value="UniProtKB"/>
</dbReference>
<dbReference type="InterPro" id="IPR044688">
    <property type="entry name" value="SCI-1-like"/>
</dbReference>
<dbReference type="PANTHER" id="PTHR34117">
    <property type="entry name" value="STYLE CELL-CYCLE INHIBITOR 1"/>
    <property type="match status" value="1"/>
</dbReference>
<dbReference type="PANTHER" id="PTHR34117:SF1">
    <property type="entry name" value="STYLE CELL-CYCLE INHIBITOR 1"/>
    <property type="match status" value="1"/>
</dbReference>
<accession>A0A1S3XQD6</accession>
<accession>F8QMT1</accession>
<proteinExistence type="evidence at transcript level"/>
<gene>
    <name evidence="4" type="primary">SCI1B</name>
</gene>